<gene>
    <name type="primary">COMTD1</name>
    <name type="ORF">UNQ766/PRO1558</name>
</gene>
<proteinExistence type="evidence at protein level"/>
<sequence>MTQPVPRLSVPAALALGSAALGAAFATGLFLGRRCPPWRGRREQCLLPPEDSRLWQYLLSRSMREHPALRSLRLLTLEQPQGDSMMTCEQAQLLANLARLIQAKKALDLGTFTGYSALALALALPADGRVVTCEVDAQPPELGRPLWRQAEAEHKIDLRLKPALETLDELLAAGEAGTFDVAVVDADKENCSAYYERCLQLLRPGGILAVLRVLWRGKVLQPPKGDVAAECVRNLNERIRRDVRVYISLLPLGDGLTLAFKI</sequence>
<keyword id="KW-0002">3D-structure</keyword>
<keyword id="KW-0472">Membrane</keyword>
<keyword id="KW-0489">Methyltransferase</keyword>
<keyword id="KW-1267">Proteomics identification</keyword>
<keyword id="KW-1185">Reference proteome</keyword>
<keyword id="KW-0949">S-adenosyl-L-methionine</keyword>
<keyword id="KW-0735">Signal-anchor</keyword>
<keyword id="KW-0808">Transferase</keyword>
<keyword id="KW-0812">Transmembrane</keyword>
<keyword id="KW-1133">Transmembrane helix</keyword>
<evidence type="ECO:0000255" key="1"/>
<evidence type="ECO:0000255" key="2">
    <source>
        <dbReference type="PROSITE-ProRule" id="PRU01019"/>
    </source>
</evidence>
<evidence type="ECO:0000269" key="3">
    <source ref="8"/>
</evidence>
<evidence type="ECO:0000305" key="4"/>
<evidence type="ECO:0007829" key="5">
    <source>
        <dbReference type="PDB" id="2AVD"/>
    </source>
</evidence>
<comment type="function">
    <text evidence="4">Putative O-methyltransferase.</text>
</comment>
<comment type="subunit">
    <text evidence="3">Homodimer.</text>
</comment>
<comment type="interaction">
    <interactant intactId="EBI-2836030">
        <id>Q86VU5</id>
    </interactant>
    <interactant intactId="EBI-10173939">
        <id>Q9UMX0-2</id>
        <label>UBQLN1</label>
    </interactant>
    <organismsDiffer>false</organismsDiffer>
    <experiments>3</experiments>
</comment>
<comment type="subcellular location">
    <subcellularLocation>
        <location evidence="4">Membrane</location>
        <topology evidence="4">Single-pass type II membrane protein</topology>
    </subcellularLocation>
</comment>
<comment type="similarity">
    <text evidence="2">Belongs to the class I-like SAM-binding methyltransferase superfamily. Cation-dependent O-methyltransferase family.</text>
</comment>
<organism>
    <name type="scientific">Homo sapiens</name>
    <name type="common">Human</name>
    <dbReference type="NCBI Taxonomy" id="9606"/>
    <lineage>
        <taxon>Eukaryota</taxon>
        <taxon>Metazoa</taxon>
        <taxon>Chordata</taxon>
        <taxon>Craniata</taxon>
        <taxon>Vertebrata</taxon>
        <taxon>Euteleostomi</taxon>
        <taxon>Mammalia</taxon>
        <taxon>Eutheria</taxon>
        <taxon>Euarchontoglires</taxon>
        <taxon>Primates</taxon>
        <taxon>Haplorrhini</taxon>
        <taxon>Catarrhini</taxon>
        <taxon>Hominidae</taxon>
        <taxon>Homo</taxon>
    </lineage>
</organism>
<dbReference type="EC" id="2.1.1.-"/>
<dbReference type="EMBL" id="AY358476">
    <property type="protein sequence ID" value="AAQ88840.1"/>
    <property type="molecule type" value="mRNA"/>
</dbReference>
<dbReference type="EMBL" id="AK074421">
    <property type="protein sequence ID" value="BAB85077.1"/>
    <property type="molecule type" value="mRNA"/>
</dbReference>
<dbReference type="EMBL" id="AL390034">
    <property type="status" value="NOT_ANNOTATED_CDS"/>
    <property type="molecule type" value="Genomic_DNA"/>
</dbReference>
<dbReference type="EMBL" id="BC023663">
    <property type="protein sequence ID" value="AAH23663.1"/>
    <property type="molecule type" value="mRNA"/>
</dbReference>
<dbReference type="EMBL" id="BC047774">
    <property type="protein sequence ID" value="AAH47774.1"/>
    <property type="molecule type" value="mRNA"/>
</dbReference>
<dbReference type="CCDS" id="CCDS7349.1"/>
<dbReference type="RefSeq" id="NP_653190.2">
    <property type="nucleotide sequence ID" value="NM_144589.2"/>
</dbReference>
<dbReference type="PDB" id="2AVD">
    <property type="method" value="X-ray"/>
    <property type="resolution" value="1.70 A"/>
    <property type="chains" value="A/B=36-262"/>
</dbReference>
<dbReference type="PDBsum" id="2AVD"/>
<dbReference type="SMR" id="Q86VU5"/>
<dbReference type="BioGRID" id="125625">
    <property type="interactions" value="219"/>
</dbReference>
<dbReference type="FunCoup" id="Q86VU5">
    <property type="interactions" value="274"/>
</dbReference>
<dbReference type="IntAct" id="Q86VU5">
    <property type="interactions" value="188"/>
</dbReference>
<dbReference type="MINT" id="Q86VU5"/>
<dbReference type="STRING" id="9606.ENSP00000361616"/>
<dbReference type="DrugBank" id="DB03923">
    <property type="generic name" value="Feruloyl Coenzyme A"/>
</dbReference>
<dbReference type="DrugBank" id="DB01752">
    <property type="generic name" value="S-adenosyl-L-homocysteine"/>
</dbReference>
<dbReference type="DrugBank" id="DB03179">
    <property type="generic name" value="Sinapoyl coenzyme A"/>
</dbReference>
<dbReference type="GlyGen" id="Q86VU5">
    <property type="glycosylation" value="1 site, 1 O-linked glycan (1 site)"/>
</dbReference>
<dbReference type="iPTMnet" id="Q86VU5"/>
<dbReference type="PhosphoSitePlus" id="Q86VU5"/>
<dbReference type="SwissPalm" id="Q86VU5"/>
<dbReference type="BioMuta" id="COMTD1"/>
<dbReference type="DMDM" id="74750472"/>
<dbReference type="jPOST" id="Q86VU5"/>
<dbReference type="MassIVE" id="Q86VU5"/>
<dbReference type="PaxDb" id="9606-ENSP00000361616"/>
<dbReference type="PeptideAtlas" id="Q86VU5"/>
<dbReference type="ProteomicsDB" id="70070"/>
<dbReference type="Pumba" id="Q86VU5"/>
<dbReference type="Antibodypedia" id="29691">
    <property type="antibodies" value="76 antibodies from 21 providers"/>
</dbReference>
<dbReference type="DNASU" id="118881"/>
<dbReference type="Ensembl" id="ENST00000372538.8">
    <property type="protein sequence ID" value="ENSP00000361616.3"/>
    <property type="gene ID" value="ENSG00000165644.11"/>
</dbReference>
<dbReference type="GeneID" id="118881"/>
<dbReference type="KEGG" id="hsa:118881"/>
<dbReference type="MANE-Select" id="ENST00000372538.8">
    <property type="protein sequence ID" value="ENSP00000361616.3"/>
    <property type="RefSeq nucleotide sequence ID" value="NM_144589.4"/>
    <property type="RefSeq protein sequence ID" value="NP_653190.2"/>
</dbReference>
<dbReference type="UCSC" id="uc001jxb.4">
    <property type="organism name" value="human"/>
</dbReference>
<dbReference type="AGR" id="HGNC:26309"/>
<dbReference type="CTD" id="118881"/>
<dbReference type="DisGeNET" id="118881"/>
<dbReference type="GeneCards" id="COMTD1"/>
<dbReference type="HGNC" id="HGNC:26309">
    <property type="gene designation" value="COMTD1"/>
</dbReference>
<dbReference type="HPA" id="ENSG00000165644">
    <property type="expression patterns" value="Tissue enhanced (pancreas)"/>
</dbReference>
<dbReference type="neXtProt" id="NX_Q86VU5"/>
<dbReference type="OpenTargets" id="ENSG00000165644"/>
<dbReference type="PharmGKB" id="PA134961676"/>
<dbReference type="VEuPathDB" id="HostDB:ENSG00000165644"/>
<dbReference type="eggNOG" id="KOG1663">
    <property type="taxonomic scope" value="Eukaryota"/>
</dbReference>
<dbReference type="GeneTree" id="ENSGT00390000004409"/>
<dbReference type="HOGENOM" id="CLU_067676_5_3_1"/>
<dbReference type="InParanoid" id="Q86VU5"/>
<dbReference type="OMA" id="VCFEGVF"/>
<dbReference type="OrthoDB" id="10251242at2759"/>
<dbReference type="PAN-GO" id="Q86VU5">
    <property type="GO annotations" value="1 GO annotation based on evolutionary models"/>
</dbReference>
<dbReference type="PhylomeDB" id="Q86VU5"/>
<dbReference type="TreeFam" id="TF312986"/>
<dbReference type="PathwayCommons" id="Q86VU5"/>
<dbReference type="SignaLink" id="Q86VU5"/>
<dbReference type="BioGRID-ORCS" id="118881">
    <property type="hits" value="21 hits in 1157 CRISPR screens"/>
</dbReference>
<dbReference type="ChiTaRS" id="COMTD1">
    <property type="organism name" value="human"/>
</dbReference>
<dbReference type="EvolutionaryTrace" id="Q86VU5"/>
<dbReference type="GenomeRNAi" id="118881"/>
<dbReference type="Pharos" id="Q86VU5">
    <property type="development level" value="Tdark"/>
</dbReference>
<dbReference type="PRO" id="PR:Q86VU5"/>
<dbReference type="Proteomes" id="UP000005640">
    <property type="component" value="Chromosome 10"/>
</dbReference>
<dbReference type="RNAct" id="Q86VU5">
    <property type="molecule type" value="protein"/>
</dbReference>
<dbReference type="Bgee" id="ENSG00000165644">
    <property type="expression patterns" value="Expressed in lower esophagus mucosa and 146 other cell types or tissues"/>
</dbReference>
<dbReference type="ExpressionAtlas" id="Q86VU5">
    <property type="expression patterns" value="baseline and differential"/>
</dbReference>
<dbReference type="GO" id="GO:0016020">
    <property type="term" value="C:membrane"/>
    <property type="evidence" value="ECO:0007669"/>
    <property type="project" value="UniProtKB-SubCell"/>
</dbReference>
<dbReference type="GO" id="GO:0005739">
    <property type="term" value="C:mitochondrion"/>
    <property type="evidence" value="ECO:0006056"/>
    <property type="project" value="FlyBase"/>
</dbReference>
<dbReference type="GO" id="GO:0008171">
    <property type="term" value="F:O-methyltransferase activity"/>
    <property type="evidence" value="ECO:0007669"/>
    <property type="project" value="InterPro"/>
</dbReference>
<dbReference type="GO" id="GO:0008757">
    <property type="term" value="F:S-adenosylmethionine-dependent methyltransferase activity"/>
    <property type="evidence" value="ECO:0000318"/>
    <property type="project" value="GO_Central"/>
</dbReference>
<dbReference type="GO" id="GO:0032259">
    <property type="term" value="P:methylation"/>
    <property type="evidence" value="ECO:0007669"/>
    <property type="project" value="UniProtKB-KW"/>
</dbReference>
<dbReference type="CDD" id="cd02440">
    <property type="entry name" value="AdoMet_MTases"/>
    <property type="match status" value="1"/>
</dbReference>
<dbReference type="Gene3D" id="3.40.50.150">
    <property type="entry name" value="Vaccinia Virus protein VP39"/>
    <property type="match status" value="1"/>
</dbReference>
<dbReference type="InterPro" id="IPR050362">
    <property type="entry name" value="Cation-dep_OMT"/>
</dbReference>
<dbReference type="InterPro" id="IPR029063">
    <property type="entry name" value="SAM-dependent_MTases_sf"/>
</dbReference>
<dbReference type="InterPro" id="IPR002935">
    <property type="entry name" value="SAM_O-MeTrfase"/>
</dbReference>
<dbReference type="PANTHER" id="PTHR10509:SF93">
    <property type="entry name" value="CATECHOL O-METHYLTRANSFERASE DOMAIN-CONTAINING PROTEIN 1"/>
    <property type="match status" value="1"/>
</dbReference>
<dbReference type="PANTHER" id="PTHR10509">
    <property type="entry name" value="O-METHYLTRANSFERASE-RELATED"/>
    <property type="match status" value="1"/>
</dbReference>
<dbReference type="Pfam" id="PF01596">
    <property type="entry name" value="Methyltransf_3"/>
    <property type="match status" value="1"/>
</dbReference>
<dbReference type="SUPFAM" id="SSF53335">
    <property type="entry name" value="S-adenosyl-L-methionine-dependent methyltransferases"/>
    <property type="match status" value="1"/>
</dbReference>
<dbReference type="PROSITE" id="PS51682">
    <property type="entry name" value="SAM_OMT_I"/>
    <property type="match status" value="1"/>
</dbReference>
<name>CMTD1_HUMAN</name>
<feature type="chain" id="PRO_0000233289" description="Catechol O-methyltransferase domain-containing protein 1">
    <location>
        <begin position="1"/>
        <end position="262"/>
    </location>
</feature>
<feature type="transmembrane region" description="Helical; Signal-anchor for type II membrane protein" evidence="1">
    <location>
        <begin position="12"/>
        <end position="32"/>
    </location>
</feature>
<feature type="binding site" evidence="2 3">
    <location>
        <position position="108"/>
    </location>
    <ligand>
        <name>S-adenosyl-L-methionine</name>
        <dbReference type="ChEBI" id="CHEBI:59789"/>
    </ligand>
</feature>
<feature type="binding site">
    <location>
        <begin position="110"/>
        <end position="111"/>
    </location>
    <ligand>
        <name>S-adenosyl-L-methionine</name>
        <dbReference type="ChEBI" id="CHEBI:59789"/>
    </ligand>
</feature>
<feature type="binding site" evidence="2 3">
    <location>
        <position position="116"/>
    </location>
    <ligand>
        <name>S-adenosyl-L-methionine</name>
        <dbReference type="ChEBI" id="CHEBI:59789"/>
    </ligand>
</feature>
<feature type="binding site" evidence="2 3">
    <location>
        <position position="134"/>
    </location>
    <ligand>
        <name>S-adenosyl-L-methionine</name>
        <dbReference type="ChEBI" id="CHEBI:59789"/>
    </ligand>
</feature>
<feature type="binding site" evidence="2">
    <location>
        <position position="135"/>
    </location>
    <ligand>
        <name>S-adenosyl-L-methionine</name>
        <dbReference type="ChEBI" id="CHEBI:59789"/>
    </ligand>
</feature>
<feature type="binding site" evidence="2">
    <location>
        <position position="163"/>
    </location>
    <ligand>
        <name>S-adenosyl-L-methionine</name>
        <dbReference type="ChEBI" id="CHEBI:59789"/>
    </ligand>
</feature>
<feature type="binding site" evidence="2 3">
    <location>
        <position position="185"/>
    </location>
    <ligand>
        <name>S-adenosyl-L-methionine</name>
        <dbReference type="ChEBI" id="CHEBI:59789"/>
    </ligand>
</feature>
<feature type="binding site" evidence="2 3">
    <location>
        <position position="187"/>
    </location>
    <ligand>
        <name>S-adenosyl-L-methionine</name>
        <dbReference type="ChEBI" id="CHEBI:59789"/>
    </ligand>
</feature>
<feature type="binding site" evidence="2 3">
    <location>
        <position position="194"/>
    </location>
    <ligand>
        <name>S-adenosyl-L-methionine</name>
        <dbReference type="ChEBI" id="CHEBI:59789"/>
    </ligand>
</feature>
<feature type="sequence conflict" description="In Ref. 2; BAB85077." evidence="4" ref="2">
    <original>S</original>
    <variation>Y</variation>
    <location>
        <position position="84"/>
    </location>
</feature>
<feature type="helix" evidence="5">
    <location>
        <begin position="53"/>
        <end position="60"/>
    </location>
</feature>
<feature type="helix" evidence="5">
    <location>
        <begin position="67"/>
        <end position="77"/>
    </location>
</feature>
<feature type="helix" evidence="5">
    <location>
        <begin position="82"/>
        <end position="84"/>
    </location>
</feature>
<feature type="helix" evidence="5">
    <location>
        <begin position="88"/>
        <end position="100"/>
    </location>
</feature>
<feature type="strand" evidence="5">
    <location>
        <begin position="105"/>
        <end position="109"/>
    </location>
</feature>
<feature type="helix" evidence="5">
    <location>
        <begin position="115"/>
        <end position="122"/>
    </location>
</feature>
<feature type="strand" evidence="5">
    <location>
        <begin position="129"/>
        <end position="135"/>
    </location>
</feature>
<feature type="helix" evidence="5">
    <location>
        <begin position="138"/>
        <end position="149"/>
    </location>
</feature>
<feature type="turn" evidence="5">
    <location>
        <begin position="153"/>
        <end position="155"/>
    </location>
</feature>
<feature type="strand" evidence="5">
    <location>
        <begin position="156"/>
        <end position="161"/>
    </location>
</feature>
<feature type="helix" evidence="5">
    <location>
        <begin position="163"/>
        <end position="172"/>
    </location>
</feature>
<feature type="strand" evidence="5">
    <location>
        <begin position="179"/>
        <end position="184"/>
    </location>
</feature>
<feature type="helix" evidence="5">
    <location>
        <begin position="191"/>
        <end position="201"/>
    </location>
</feature>
<feature type="strand" evidence="5">
    <location>
        <begin position="202"/>
        <end position="211"/>
    </location>
</feature>
<feature type="helix" evidence="5">
    <location>
        <begin position="215"/>
        <end position="220"/>
    </location>
</feature>
<feature type="helix" evidence="5">
    <location>
        <begin position="227"/>
        <end position="241"/>
    </location>
</feature>
<feature type="strand" evidence="5">
    <location>
        <begin position="245"/>
        <end position="250"/>
    </location>
</feature>
<feature type="strand" evidence="5">
    <location>
        <begin position="256"/>
        <end position="261"/>
    </location>
</feature>
<protein>
    <recommendedName>
        <fullName>Catechol O-methyltransferase domain-containing protein 1</fullName>
        <ecNumber>2.1.1.-</ecNumber>
    </recommendedName>
</protein>
<reference key="1">
    <citation type="journal article" date="2003" name="Genome Res.">
        <title>The secreted protein discovery initiative (SPDI), a large-scale effort to identify novel human secreted and transmembrane proteins: a bioinformatics assessment.</title>
        <authorList>
            <person name="Clark H.F."/>
            <person name="Gurney A.L."/>
            <person name="Abaya E."/>
            <person name="Baker K."/>
            <person name="Baldwin D.T."/>
            <person name="Brush J."/>
            <person name="Chen J."/>
            <person name="Chow B."/>
            <person name="Chui C."/>
            <person name="Crowley C."/>
            <person name="Currell B."/>
            <person name="Deuel B."/>
            <person name="Dowd P."/>
            <person name="Eaton D."/>
            <person name="Foster J.S."/>
            <person name="Grimaldi C."/>
            <person name="Gu Q."/>
            <person name="Hass P.E."/>
            <person name="Heldens S."/>
            <person name="Huang A."/>
            <person name="Kim H.S."/>
            <person name="Klimowski L."/>
            <person name="Jin Y."/>
            <person name="Johnson S."/>
            <person name="Lee J."/>
            <person name="Lewis L."/>
            <person name="Liao D."/>
            <person name="Mark M.R."/>
            <person name="Robbie E."/>
            <person name="Sanchez C."/>
            <person name="Schoenfeld J."/>
            <person name="Seshagiri S."/>
            <person name="Simmons L."/>
            <person name="Singh J."/>
            <person name="Smith V."/>
            <person name="Stinson J."/>
            <person name="Vagts A."/>
            <person name="Vandlen R.L."/>
            <person name="Watanabe C."/>
            <person name="Wieand D."/>
            <person name="Woods K."/>
            <person name="Xie M.-H."/>
            <person name="Yansura D.G."/>
            <person name="Yi S."/>
            <person name="Yu G."/>
            <person name="Yuan J."/>
            <person name="Zhang M."/>
            <person name="Zhang Z."/>
            <person name="Goddard A.D."/>
            <person name="Wood W.I."/>
            <person name="Godowski P.J."/>
            <person name="Gray A.M."/>
        </authorList>
    </citation>
    <scope>NUCLEOTIDE SEQUENCE [LARGE SCALE MRNA]</scope>
</reference>
<reference key="2">
    <citation type="journal article" date="2004" name="Nat. Genet.">
        <title>Complete sequencing and characterization of 21,243 full-length human cDNAs.</title>
        <authorList>
            <person name="Ota T."/>
            <person name="Suzuki Y."/>
            <person name="Nishikawa T."/>
            <person name="Otsuki T."/>
            <person name="Sugiyama T."/>
            <person name="Irie R."/>
            <person name="Wakamatsu A."/>
            <person name="Hayashi K."/>
            <person name="Sato H."/>
            <person name="Nagai K."/>
            <person name="Kimura K."/>
            <person name="Makita H."/>
            <person name="Sekine M."/>
            <person name="Obayashi M."/>
            <person name="Nishi T."/>
            <person name="Shibahara T."/>
            <person name="Tanaka T."/>
            <person name="Ishii S."/>
            <person name="Yamamoto J."/>
            <person name="Saito K."/>
            <person name="Kawai Y."/>
            <person name="Isono Y."/>
            <person name="Nakamura Y."/>
            <person name="Nagahari K."/>
            <person name="Murakami K."/>
            <person name="Yasuda T."/>
            <person name="Iwayanagi T."/>
            <person name="Wagatsuma M."/>
            <person name="Shiratori A."/>
            <person name="Sudo H."/>
            <person name="Hosoiri T."/>
            <person name="Kaku Y."/>
            <person name="Kodaira H."/>
            <person name="Kondo H."/>
            <person name="Sugawara M."/>
            <person name="Takahashi M."/>
            <person name="Kanda K."/>
            <person name="Yokoi T."/>
            <person name="Furuya T."/>
            <person name="Kikkawa E."/>
            <person name="Omura Y."/>
            <person name="Abe K."/>
            <person name="Kamihara K."/>
            <person name="Katsuta N."/>
            <person name="Sato K."/>
            <person name="Tanikawa M."/>
            <person name="Yamazaki M."/>
            <person name="Ninomiya K."/>
            <person name="Ishibashi T."/>
            <person name="Yamashita H."/>
            <person name="Murakawa K."/>
            <person name="Fujimori K."/>
            <person name="Tanai H."/>
            <person name="Kimata M."/>
            <person name="Watanabe M."/>
            <person name="Hiraoka S."/>
            <person name="Chiba Y."/>
            <person name="Ishida S."/>
            <person name="Ono Y."/>
            <person name="Takiguchi S."/>
            <person name="Watanabe S."/>
            <person name="Yosida M."/>
            <person name="Hotuta T."/>
            <person name="Kusano J."/>
            <person name="Kanehori K."/>
            <person name="Takahashi-Fujii A."/>
            <person name="Hara H."/>
            <person name="Tanase T.-O."/>
            <person name="Nomura Y."/>
            <person name="Togiya S."/>
            <person name="Komai F."/>
            <person name="Hara R."/>
            <person name="Takeuchi K."/>
            <person name="Arita M."/>
            <person name="Imose N."/>
            <person name="Musashino K."/>
            <person name="Yuuki H."/>
            <person name="Oshima A."/>
            <person name="Sasaki N."/>
            <person name="Aotsuka S."/>
            <person name="Yoshikawa Y."/>
            <person name="Matsunawa H."/>
            <person name="Ichihara T."/>
            <person name="Shiohata N."/>
            <person name="Sano S."/>
            <person name="Moriya S."/>
            <person name="Momiyama H."/>
            <person name="Satoh N."/>
            <person name="Takami S."/>
            <person name="Terashima Y."/>
            <person name="Suzuki O."/>
            <person name="Nakagawa S."/>
            <person name="Senoh A."/>
            <person name="Mizoguchi H."/>
            <person name="Goto Y."/>
            <person name="Shimizu F."/>
            <person name="Wakebe H."/>
            <person name="Hishigaki H."/>
            <person name="Watanabe T."/>
            <person name="Sugiyama A."/>
            <person name="Takemoto M."/>
            <person name="Kawakami B."/>
            <person name="Yamazaki M."/>
            <person name="Watanabe K."/>
            <person name="Kumagai A."/>
            <person name="Itakura S."/>
            <person name="Fukuzumi Y."/>
            <person name="Fujimori Y."/>
            <person name="Komiyama M."/>
            <person name="Tashiro H."/>
            <person name="Tanigami A."/>
            <person name="Fujiwara T."/>
            <person name="Ono T."/>
            <person name="Yamada K."/>
            <person name="Fujii Y."/>
            <person name="Ozaki K."/>
            <person name="Hirao M."/>
            <person name="Ohmori Y."/>
            <person name="Kawabata A."/>
            <person name="Hikiji T."/>
            <person name="Kobatake N."/>
            <person name="Inagaki H."/>
            <person name="Ikema Y."/>
            <person name="Okamoto S."/>
            <person name="Okitani R."/>
            <person name="Kawakami T."/>
            <person name="Noguchi S."/>
            <person name="Itoh T."/>
            <person name="Shigeta K."/>
            <person name="Senba T."/>
            <person name="Matsumura K."/>
            <person name="Nakajima Y."/>
            <person name="Mizuno T."/>
            <person name="Morinaga M."/>
            <person name="Sasaki M."/>
            <person name="Togashi T."/>
            <person name="Oyama M."/>
            <person name="Hata H."/>
            <person name="Watanabe M."/>
            <person name="Komatsu T."/>
            <person name="Mizushima-Sugano J."/>
            <person name="Satoh T."/>
            <person name="Shirai Y."/>
            <person name="Takahashi Y."/>
            <person name="Nakagawa K."/>
            <person name="Okumura K."/>
            <person name="Nagase T."/>
            <person name="Nomura N."/>
            <person name="Kikuchi H."/>
            <person name="Masuho Y."/>
            <person name="Yamashita R."/>
            <person name="Nakai K."/>
            <person name="Yada T."/>
            <person name="Nakamura Y."/>
            <person name="Ohara O."/>
            <person name="Isogai T."/>
            <person name="Sugano S."/>
        </authorList>
    </citation>
    <scope>NUCLEOTIDE SEQUENCE [LARGE SCALE MRNA]</scope>
</reference>
<reference key="3">
    <citation type="journal article" date="2004" name="Nature">
        <title>The DNA sequence and comparative analysis of human chromosome 10.</title>
        <authorList>
            <person name="Deloukas P."/>
            <person name="Earthrowl M.E."/>
            <person name="Grafham D.V."/>
            <person name="Rubenfield M."/>
            <person name="French L."/>
            <person name="Steward C.A."/>
            <person name="Sims S.K."/>
            <person name="Jones M.C."/>
            <person name="Searle S."/>
            <person name="Scott C."/>
            <person name="Howe K."/>
            <person name="Hunt S.E."/>
            <person name="Andrews T.D."/>
            <person name="Gilbert J.G.R."/>
            <person name="Swarbreck D."/>
            <person name="Ashurst J.L."/>
            <person name="Taylor A."/>
            <person name="Battles J."/>
            <person name="Bird C.P."/>
            <person name="Ainscough R."/>
            <person name="Almeida J.P."/>
            <person name="Ashwell R.I.S."/>
            <person name="Ambrose K.D."/>
            <person name="Babbage A.K."/>
            <person name="Bagguley C.L."/>
            <person name="Bailey J."/>
            <person name="Banerjee R."/>
            <person name="Bates K."/>
            <person name="Beasley H."/>
            <person name="Bray-Allen S."/>
            <person name="Brown A.J."/>
            <person name="Brown J.Y."/>
            <person name="Burford D.C."/>
            <person name="Burrill W."/>
            <person name="Burton J."/>
            <person name="Cahill P."/>
            <person name="Camire D."/>
            <person name="Carter N.P."/>
            <person name="Chapman J.C."/>
            <person name="Clark S.Y."/>
            <person name="Clarke G."/>
            <person name="Clee C.M."/>
            <person name="Clegg S."/>
            <person name="Corby N."/>
            <person name="Coulson A."/>
            <person name="Dhami P."/>
            <person name="Dutta I."/>
            <person name="Dunn M."/>
            <person name="Faulkner L."/>
            <person name="Frankish A."/>
            <person name="Frankland J.A."/>
            <person name="Garner P."/>
            <person name="Garnett J."/>
            <person name="Gribble S."/>
            <person name="Griffiths C."/>
            <person name="Grocock R."/>
            <person name="Gustafson E."/>
            <person name="Hammond S."/>
            <person name="Harley J.L."/>
            <person name="Hart E."/>
            <person name="Heath P.D."/>
            <person name="Ho T.P."/>
            <person name="Hopkins B."/>
            <person name="Horne J."/>
            <person name="Howden P.J."/>
            <person name="Huckle E."/>
            <person name="Hynds C."/>
            <person name="Johnson C."/>
            <person name="Johnson D."/>
            <person name="Kana A."/>
            <person name="Kay M."/>
            <person name="Kimberley A.M."/>
            <person name="Kershaw J.K."/>
            <person name="Kokkinaki M."/>
            <person name="Laird G.K."/>
            <person name="Lawlor S."/>
            <person name="Lee H.M."/>
            <person name="Leongamornlert D.A."/>
            <person name="Laird G."/>
            <person name="Lloyd C."/>
            <person name="Lloyd D.M."/>
            <person name="Loveland J."/>
            <person name="Lovell J."/>
            <person name="McLaren S."/>
            <person name="McLay K.E."/>
            <person name="McMurray A."/>
            <person name="Mashreghi-Mohammadi M."/>
            <person name="Matthews L."/>
            <person name="Milne S."/>
            <person name="Nickerson T."/>
            <person name="Nguyen M."/>
            <person name="Overton-Larty E."/>
            <person name="Palmer S.A."/>
            <person name="Pearce A.V."/>
            <person name="Peck A.I."/>
            <person name="Pelan S."/>
            <person name="Phillimore B."/>
            <person name="Porter K."/>
            <person name="Rice C.M."/>
            <person name="Rogosin A."/>
            <person name="Ross M.T."/>
            <person name="Sarafidou T."/>
            <person name="Sehra H.K."/>
            <person name="Shownkeen R."/>
            <person name="Skuce C.D."/>
            <person name="Smith M."/>
            <person name="Standring L."/>
            <person name="Sycamore N."/>
            <person name="Tester J."/>
            <person name="Thorpe A."/>
            <person name="Torcasso W."/>
            <person name="Tracey A."/>
            <person name="Tromans A."/>
            <person name="Tsolas J."/>
            <person name="Wall M."/>
            <person name="Walsh J."/>
            <person name="Wang H."/>
            <person name="Weinstock K."/>
            <person name="West A.P."/>
            <person name="Willey D.L."/>
            <person name="Whitehead S.L."/>
            <person name="Wilming L."/>
            <person name="Wray P.W."/>
            <person name="Young L."/>
            <person name="Chen Y."/>
            <person name="Lovering R.C."/>
            <person name="Moschonas N.K."/>
            <person name="Siebert R."/>
            <person name="Fechtel K."/>
            <person name="Bentley D."/>
            <person name="Durbin R.M."/>
            <person name="Hubbard T."/>
            <person name="Doucette-Stamm L."/>
            <person name="Beck S."/>
            <person name="Smith D.R."/>
            <person name="Rogers J."/>
        </authorList>
    </citation>
    <scope>NUCLEOTIDE SEQUENCE [LARGE SCALE GENOMIC DNA]</scope>
</reference>
<reference key="4">
    <citation type="journal article" date="2004" name="Genome Res.">
        <title>The status, quality, and expansion of the NIH full-length cDNA project: the Mammalian Gene Collection (MGC).</title>
        <authorList>
            <consortium name="The MGC Project Team"/>
        </authorList>
    </citation>
    <scope>NUCLEOTIDE SEQUENCE [LARGE SCALE MRNA]</scope>
    <source>
        <tissue>Brain</tissue>
        <tissue>Lung</tissue>
    </source>
</reference>
<reference key="5">
    <citation type="journal article" date="2011" name="BMC Syst. Biol.">
        <title>Initial characterization of the human central proteome.</title>
        <authorList>
            <person name="Burkard T.R."/>
            <person name="Planyavsky M."/>
            <person name="Kaupe I."/>
            <person name="Breitwieser F.P."/>
            <person name="Buerckstuemmer T."/>
            <person name="Bennett K.L."/>
            <person name="Superti-Furga G."/>
            <person name="Colinge J."/>
        </authorList>
    </citation>
    <scope>IDENTIFICATION BY MASS SPECTROMETRY [LARGE SCALE ANALYSIS]</scope>
</reference>
<reference key="6">
    <citation type="journal article" date="2014" name="J. Proteomics">
        <title>An enzyme assisted RP-RPLC approach for in-depth analysis of human liver phosphoproteome.</title>
        <authorList>
            <person name="Bian Y."/>
            <person name="Song C."/>
            <person name="Cheng K."/>
            <person name="Dong M."/>
            <person name="Wang F."/>
            <person name="Huang J."/>
            <person name="Sun D."/>
            <person name="Wang L."/>
            <person name="Ye M."/>
            <person name="Zou H."/>
        </authorList>
    </citation>
    <scope>IDENTIFICATION BY MASS SPECTROMETRY [LARGE SCALE ANALYSIS]</scope>
    <source>
        <tissue>Liver</tissue>
    </source>
</reference>
<reference key="7">
    <citation type="journal article" date="2015" name="Proteomics">
        <title>N-terminome analysis of the human mitochondrial proteome.</title>
        <authorList>
            <person name="Vaca Jacome A.S."/>
            <person name="Rabilloud T."/>
            <person name="Schaeffer-Reiss C."/>
            <person name="Rompais M."/>
            <person name="Ayoub D."/>
            <person name="Lane L."/>
            <person name="Bairoch A."/>
            <person name="Van Dorsselaer A."/>
            <person name="Carapito C."/>
        </authorList>
    </citation>
    <scope>IDENTIFICATION BY MASS SPECTROMETRY [LARGE SCALE ANALYSIS]</scope>
</reference>
<reference key="8">
    <citation type="submission" date="2006-03" db="PDB data bank">
        <title>The crystal structure of human catechol-O-methyltransferase domain containing 1 in complex with S-adenosyl-L-methionine.</title>
        <authorList>
            <consortium name="Structural genomics consortium (SGC)"/>
        </authorList>
    </citation>
    <scope>X-RAY CRYSTALLOGRAPHY (1.7 ANGSTROMS) OF 44-262 IN COMPLEX WITH S-ADENOSYL-L-METHIONINE</scope>
    <scope>SUBUNIT</scope>
</reference>
<accession>Q86VU5</accession>
<accession>Q8TE79</accession>